<feature type="chain" id="PRO_0000049464" description="Uncharacterized protein YbfJ">
    <location>
        <begin position="1"/>
        <end position="132"/>
    </location>
</feature>
<dbReference type="EMBL" id="AB006424">
    <property type="protein sequence ID" value="BAA33122.1"/>
    <property type="molecule type" value="Genomic_DNA"/>
</dbReference>
<dbReference type="EMBL" id="AL009126">
    <property type="protein sequence ID" value="CAB12019.1"/>
    <property type="molecule type" value="Genomic_DNA"/>
</dbReference>
<dbReference type="PIR" id="E69749">
    <property type="entry name" value="E69749"/>
</dbReference>
<dbReference type="RefSeq" id="NP_388107.1">
    <property type="nucleotide sequence ID" value="NC_000964.3"/>
</dbReference>
<dbReference type="RefSeq" id="WP_003246434.1">
    <property type="nucleotide sequence ID" value="NZ_OZ025638.1"/>
</dbReference>
<dbReference type="SMR" id="O31451"/>
<dbReference type="FunCoup" id="O31451">
    <property type="interactions" value="193"/>
</dbReference>
<dbReference type="STRING" id="224308.BSU02250"/>
<dbReference type="PaxDb" id="224308-BSU02250"/>
<dbReference type="EnsemblBacteria" id="CAB12019">
    <property type="protein sequence ID" value="CAB12019"/>
    <property type="gene ID" value="BSU_02250"/>
</dbReference>
<dbReference type="GeneID" id="938435"/>
<dbReference type="KEGG" id="bsu:BSU02250"/>
<dbReference type="PATRIC" id="fig|224308.179.peg.231"/>
<dbReference type="InParanoid" id="O31451"/>
<dbReference type="OrthoDB" id="2909448at2"/>
<dbReference type="BioCyc" id="BSUB:BSU02250-MONOMER"/>
<dbReference type="Proteomes" id="UP000001570">
    <property type="component" value="Chromosome"/>
</dbReference>
<dbReference type="Gene3D" id="2.60.40.10">
    <property type="entry name" value="Immunoglobulins"/>
    <property type="match status" value="1"/>
</dbReference>
<dbReference type="InterPro" id="IPR019730">
    <property type="entry name" value="DUF2606"/>
</dbReference>
<dbReference type="InterPro" id="IPR013783">
    <property type="entry name" value="Ig-like_fold"/>
</dbReference>
<dbReference type="Pfam" id="PF10794">
    <property type="entry name" value="DUF2606"/>
    <property type="match status" value="1"/>
</dbReference>
<protein>
    <recommendedName>
        <fullName>Uncharacterized protein YbfJ</fullName>
    </recommendedName>
</protein>
<reference key="1">
    <citation type="submission" date="1997-07" db="EMBL/GenBank/DDBJ databases">
        <title>Sequence analysis of the 70kb region between 17 and 23 degree of the Bacillus subtilis chromosome.</title>
        <authorList>
            <person name="Haga K."/>
            <person name="Liu H."/>
            <person name="Yasumoto K."/>
            <person name="Takahashi H."/>
            <person name="Yoshikawa H."/>
        </authorList>
    </citation>
    <scope>NUCLEOTIDE SEQUENCE [GENOMIC DNA]</scope>
    <source>
        <strain>168</strain>
    </source>
</reference>
<reference key="2">
    <citation type="journal article" date="1997" name="Nature">
        <title>The complete genome sequence of the Gram-positive bacterium Bacillus subtilis.</title>
        <authorList>
            <person name="Kunst F."/>
            <person name="Ogasawara N."/>
            <person name="Moszer I."/>
            <person name="Albertini A.M."/>
            <person name="Alloni G."/>
            <person name="Azevedo V."/>
            <person name="Bertero M.G."/>
            <person name="Bessieres P."/>
            <person name="Bolotin A."/>
            <person name="Borchert S."/>
            <person name="Borriss R."/>
            <person name="Boursier L."/>
            <person name="Brans A."/>
            <person name="Braun M."/>
            <person name="Brignell S.C."/>
            <person name="Bron S."/>
            <person name="Brouillet S."/>
            <person name="Bruschi C.V."/>
            <person name="Caldwell B."/>
            <person name="Capuano V."/>
            <person name="Carter N.M."/>
            <person name="Choi S.-K."/>
            <person name="Codani J.-J."/>
            <person name="Connerton I.F."/>
            <person name="Cummings N.J."/>
            <person name="Daniel R.A."/>
            <person name="Denizot F."/>
            <person name="Devine K.M."/>
            <person name="Duesterhoeft A."/>
            <person name="Ehrlich S.D."/>
            <person name="Emmerson P.T."/>
            <person name="Entian K.-D."/>
            <person name="Errington J."/>
            <person name="Fabret C."/>
            <person name="Ferrari E."/>
            <person name="Foulger D."/>
            <person name="Fritz C."/>
            <person name="Fujita M."/>
            <person name="Fujita Y."/>
            <person name="Fuma S."/>
            <person name="Galizzi A."/>
            <person name="Galleron N."/>
            <person name="Ghim S.-Y."/>
            <person name="Glaser P."/>
            <person name="Goffeau A."/>
            <person name="Golightly E.J."/>
            <person name="Grandi G."/>
            <person name="Guiseppi G."/>
            <person name="Guy B.J."/>
            <person name="Haga K."/>
            <person name="Haiech J."/>
            <person name="Harwood C.R."/>
            <person name="Henaut A."/>
            <person name="Hilbert H."/>
            <person name="Holsappel S."/>
            <person name="Hosono S."/>
            <person name="Hullo M.-F."/>
            <person name="Itaya M."/>
            <person name="Jones L.-M."/>
            <person name="Joris B."/>
            <person name="Karamata D."/>
            <person name="Kasahara Y."/>
            <person name="Klaerr-Blanchard M."/>
            <person name="Klein C."/>
            <person name="Kobayashi Y."/>
            <person name="Koetter P."/>
            <person name="Koningstein G."/>
            <person name="Krogh S."/>
            <person name="Kumano M."/>
            <person name="Kurita K."/>
            <person name="Lapidus A."/>
            <person name="Lardinois S."/>
            <person name="Lauber J."/>
            <person name="Lazarevic V."/>
            <person name="Lee S.-M."/>
            <person name="Levine A."/>
            <person name="Liu H."/>
            <person name="Masuda S."/>
            <person name="Mauel C."/>
            <person name="Medigue C."/>
            <person name="Medina N."/>
            <person name="Mellado R.P."/>
            <person name="Mizuno M."/>
            <person name="Moestl D."/>
            <person name="Nakai S."/>
            <person name="Noback M."/>
            <person name="Noone D."/>
            <person name="O'Reilly M."/>
            <person name="Ogawa K."/>
            <person name="Ogiwara A."/>
            <person name="Oudega B."/>
            <person name="Park S.-H."/>
            <person name="Parro V."/>
            <person name="Pohl T.M."/>
            <person name="Portetelle D."/>
            <person name="Porwollik S."/>
            <person name="Prescott A.M."/>
            <person name="Presecan E."/>
            <person name="Pujic P."/>
            <person name="Purnelle B."/>
            <person name="Rapoport G."/>
            <person name="Rey M."/>
            <person name="Reynolds S."/>
            <person name="Rieger M."/>
            <person name="Rivolta C."/>
            <person name="Rocha E."/>
            <person name="Roche B."/>
            <person name="Rose M."/>
            <person name="Sadaie Y."/>
            <person name="Sato T."/>
            <person name="Scanlan E."/>
            <person name="Schleich S."/>
            <person name="Schroeter R."/>
            <person name="Scoffone F."/>
            <person name="Sekiguchi J."/>
            <person name="Sekowska A."/>
            <person name="Seror S.J."/>
            <person name="Serror P."/>
            <person name="Shin B.-S."/>
            <person name="Soldo B."/>
            <person name="Sorokin A."/>
            <person name="Tacconi E."/>
            <person name="Takagi T."/>
            <person name="Takahashi H."/>
            <person name="Takemaru K."/>
            <person name="Takeuchi M."/>
            <person name="Tamakoshi A."/>
            <person name="Tanaka T."/>
            <person name="Terpstra P."/>
            <person name="Tognoni A."/>
            <person name="Tosato V."/>
            <person name="Uchiyama S."/>
            <person name="Vandenbol M."/>
            <person name="Vannier F."/>
            <person name="Vassarotti A."/>
            <person name="Viari A."/>
            <person name="Wambutt R."/>
            <person name="Wedler E."/>
            <person name="Wedler H."/>
            <person name="Weitzenegger T."/>
            <person name="Winters P."/>
            <person name="Wipat A."/>
            <person name="Yamamoto H."/>
            <person name="Yamane K."/>
            <person name="Yasumoto K."/>
            <person name="Yata K."/>
            <person name="Yoshida K."/>
            <person name="Yoshikawa H.-F."/>
            <person name="Zumstein E."/>
            <person name="Yoshikawa H."/>
            <person name="Danchin A."/>
        </authorList>
    </citation>
    <scope>NUCLEOTIDE SEQUENCE [LARGE SCALE GENOMIC DNA]</scope>
    <source>
        <strain>168</strain>
    </source>
</reference>
<proteinExistence type="predicted"/>
<sequence>MYSTIFNIGQINKYSKLAIFMSILFLCGCSSQTHSSQKETTIPVTLHVEDAKGLPVEGVQVTIVKAPSSDEEPSTEIGEILGKTDKNGDIKWDTGRKGDYSVALTKGETSVTHHISLTEDKKDHAIPLVFKE</sequence>
<keyword id="KW-1185">Reference proteome</keyword>
<organism>
    <name type="scientific">Bacillus subtilis (strain 168)</name>
    <dbReference type="NCBI Taxonomy" id="224308"/>
    <lineage>
        <taxon>Bacteria</taxon>
        <taxon>Bacillati</taxon>
        <taxon>Bacillota</taxon>
        <taxon>Bacilli</taxon>
        <taxon>Bacillales</taxon>
        <taxon>Bacillaceae</taxon>
        <taxon>Bacillus</taxon>
    </lineage>
</organism>
<name>YBFJ_BACSU</name>
<gene>
    <name type="primary">ybfJ</name>
    <name type="ordered locus">BSU02250</name>
</gene>
<accession>O31451</accession>